<proteinExistence type="evidence at transcript level"/>
<sequence length="155" mass="17377">MNSVFRSTARCLRSATWQYKTAHKNGELSVGRARLMCSSAGQKNLEEMVKKDKVVVFMKGTPAQPMCGFSNAVVQILRMHGVDNYASYNVLDDQDVRQGIKTFSNWPTIPQVFFNGEFVGGCDILLQMHQSGDLVEELQKLGIRSALLDQEKESK</sequence>
<keyword id="KW-0001">2Fe-2S</keyword>
<keyword id="KW-0408">Iron</keyword>
<keyword id="KW-0411">Iron-sulfur</keyword>
<keyword id="KW-0479">Metal-binding</keyword>
<keyword id="KW-0496">Mitochondrion</keyword>
<keyword id="KW-0676">Redox-active center</keyword>
<keyword id="KW-1185">Reference proteome</keyword>
<keyword id="KW-0809">Transit peptide</keyword>
<evidence type="ECO:0000250" key="1">
    <source>
        <dbReference type="UniProtKB" id="Q86SX6"/>
    </source>
</evidence>
<evidence type="ECO:0000255" key="2"/>
<evidence type="ECO:0000255" key="3">
    <source>
        <dbReference type="PROSITE-ProRule" id="PRU00686"/>
    </source>
</evidence>
<evidence type="ECO:0000269" key="4">
    <source>
    </source>
</evidence>
<accession>Q6PBM1</accession>
<gene>
    <name type="primary">glrx5</name>
    <name type="synonym">grx5</name>
    <name type="synonym">shiraz</name>
    <name type="ORF">si:ch211-121d13.1</name>
</gene>
<comment type="function">
    <text evidence="4">Monothiol glutaredoxin involved in mitochondrial iron-sulfur (Fe/S) cluster transfer (PubMed:16110529). Receives iron-sulfur clusters from scaffold protein ISCU and mediates their transfer to apoproteins, to the 4Fe/FS cluster biosynthesis machinery, or export from mitochondrion (PubMed:16110529). Required for normal hemoglobin biosynthesis (PubMed:16110529).</text>
</comment>
<comment type="subunit">
    <text evidence="1">Homodimer.</text>
</comment>
<comment type="subcellular location">
    <subcellularLocation>
        <location evidence="4">Mitochondrion</location>
    </subcellularLocation>
</comment>
<comment type="developmental stage">
    <text>Detected in embryonic intermediate cell mass (site of hematopoiesis), liver and heart.</text>
</comment>
<comment type="disruption phenotype">
    <text evidence="4">Lethal between 7 and 10 dpf. Embryos show hypochromia, and circulating blood cells are pale due to a defect in hemoglobin biosynthesis.</text>
</comment>
<reference key="1">
    <citation type="journal article" date="2005" name="Nature">
        <title>Deficiency of glutaredoxin 5 reveals Fe-S clusters are required for vertebrate haem synthesis.</title>
        <authorList>
            <consortium name="The Tuebingen 2000 screen consortium"/>
            <person name="Wingert R.A."/>
            <person name="Galloway J.L."/>
            <person name="Barut B."/>
            <person name="Foott H."/>
            <person name="Fraenkel P."/>
            <person name="Axe J.L."/>
            <person name="Weber G.J."/>
            <person name="Dooley K."/>
            <person name="Davidson A.J."/>
            <person name="Schmid B."/>
            <person name="Paw B.H."/>
            <person name="Shaw G.C."/>
            <person name="Kingsley P."/>
            <person name="Palis J."/>
            <person name="Schubert H."/>
            <person name="Chen O."/>
            <person name="Kaplan J."/>
            <person name="Zon L.I."/>
        </authorList>
    </citation>
    <scope>NUCLEOTIDE SEQUENCE [MRNA]</scope>
    <scope>FUNCTION</scope>
    <scope>SUBCELLULAR LOCATION</scope>
    <scope>DISRUPTION PHENOTYPE</scope>
</reference>
<reference key="2">
    <citation type="journal article" date="2005" name="Nature">
        <authorList>
            <consortium name="The Tuebingen 2000 screen consortium"/>
            <person name="Wingert R.A."/>
            <person name="Galloway J.L."/>
            <person name="Barut B."/>
            <person name="Foott H."/>
            <person name="Fraenkel P."/>
            <person name="Axe J.L."/>
            <person name="Weber G.J."/>
            <person name="Dooley K."/>
            <person name="Davidson A.J."/>
            <person name="Schmid B."/>
            <person name="Paw B.H."/>
            <person name="Shaw G.C."/>
            <person name="Kingsley P."/>
            <person name="Palis J."/>
            <person name="Schubert H."/>
            <person name="Chen O."/>
            <person name="Kaplan J."/>
        </authorList>
    </citation>
    <scope>ERRATUM OF PUBMED:16110529</scope>
</reference>
<reference key="3">
    <citation type="journal article" date="2013" name="Nature">
        <title>The zebrafish reference genome sequence and its relationship to the human genome.</title>
        <authorList>
            <person name="Howe K."/>
            <person name="Clark M.D."/>
            <person name="Torroja C.F."/>
            <person name="Torrance J."/>
            <person name="Berthelot C."/>
            <person name="Muffato M."/>
            <person name="Collins J.E."/>
            <person name="Humphray S."/>
            <person name="McLaren K."/>
            <person name="Matthews L."/>
            <person name="McLaren S."/>
            <person name="Sealy I."/>
            <person name="Caccamo M."/>
            <person name="Churcher C."/>
            <person name="Scott C."/>
            <person name="Barrett J.C."/>
            <person name="Koch R."/>
            <person name="Rauch G.J."/>
            <person name="White S."/>
            <person name="Chow W."/>
            <person name="Kilian B."/>
            <person name="Quintais L.T."/>
            <person name="Guerra-Assuncao J.A."/>
            <person name="Zhou Y."/>
            <person name="Gu Y."/>
            <person name="Yen J."/>
            <person name="Vogel J.H."/>
            <person name="Eyre T."/>
            <person name="Redmond S."/>
            <person name="Banerjee R."/>
            <person name="Chi J."/>
            <person name="Fu B."/>
            <person name="Langley E."/>
            <person name="Maguire S.F."/>
            <person name="Laird G.K."/>
            <person name="Lloyd D."/>
            <person name="Kenyon E."/>
            <person name="Donaldson S."/>
            <person name="Sehra H."/>
            <person name="Almeida-King J."/>
            <person name="Loveland J."/>
            <person name="Trevanion S."/>
            <person name="Jones M."/>
            <person name="Quail M."/>
            <person name="Willey D."/>
            <person name="Hunt A."/>
            <person name="Burton J."/>
            <person name="Sims S."/>
            <person name="McLay K."/>
            <person name="Plumb B."/>
            <person name="Davis J."/>
            <person name="Clee C."/>
            <person name="Oliver K."/>
            <person name="Clark R."/>
            <person name="Riddle C."/>
            <person name="Elliot D."/>
            <person name="Threadgold G."/>
            <person name="Harden G."/>
            <person name="Ware D."/>
            <person name="Begum S."/>
            <person name="Mortimore B."/>
            <person name="Kerry G."/>
            <person name="Heath P."/>
            <person name="Phillimore B."/>
            <person name="Tracey A."/>
            <person name="Corby N."/>
            <person name="Dunn M."/>
            <person name="Johnson C."/>
            <person name="Wood J."/>
            <person name="Clark S."/>
            <person name="Pelan S."/>
            <person name="Griffiths G."/>
            <person name="Smith M."/>
            <person name="Glithero R."/>
            <person name="Howden P."/>
            <person name="Barker N."/>
            <person name="Lloyd C."/>
            <person name="Stevens C."/>
            <person name="Harley J."/>
            <person name="Holt K."/>
            <person name="Panagiotidis G."/>
            <person name="Lovell J."/>
            <person name="Beasley H."/>
            <person name="Henderson C."/>
            <person name="Gordon D."/>
            <person name="Auger K."/>
            <person name="Wright D."/>
            <person name="Collins J."/>
            <person name="Raisen C."/>
            <person name="Dyer L."/>
            <person name="Leung K."/>
            <person name="Robertson L."/>
            <person name="Ambridge K."/>
            <person name="Leongamornlert D."/>
            <person name="McGuire S."/>
            <person name="Gilderthorp R."/>
            <person name="Griffiths C."/>
            <person name="Manthravadi D."/>
            <person name="Nichol S."/>
            <person name="Barker G."/>
            <person name="Whitehead S."/>
            <person name="Kay M."/>
            <person name="Brown J."/>
            <person name="Murnane C."/>
            <person name="Gray E."/>
            <person name="Humphries M."/>
            <person name="Sycamore N."/>
            <person name="Barker D."/>
            <person name="Saunders D."/>
            <person name="Wallis J."/>
            <person name="Babbage A."/>
            <person name="Hammond S."/>
            <person name="Mashreghi-Mohammadi M."/>
            <person name="Barr L."/>
            <person name="Martin S."/>
            <person name="Wray P."/>
            <person name="Ellington A."/>
            <person name="Matthews N."/>
            <person name="Ellwood M."/>
            <person name="Woodmansey R."/>
            <person name="Clark G."/>
            <person name="Cooper J."/>
            <person name="Tromans A."/>
            <person name="Grafham D."/>
            <person name="Skuce C."/>
            <person name="Pandian R."/>
            <person name="Andrews R."/>
            <person name="Harrison E."/>
            <person name="Kimberley A."/>
            <person name="Garnett J."/>
            <person name="Fosker N."/>
            <person name="Hall R."/>
            <person name="Garner P."/>
            <person name="Kelly D."/>
            <person name="Bird C."/>
            <person name="Palmer S."/>
            <person name="Gehring I."/>
            <person name="Berger A."/>
            <person name="Dooley C.M."/>
            <person name="Ersan-Urun Z."/>
            <person name="Eser C."/>
            <person name="Geiger H."/>
            <person name="Geisler M."/>
            <person name="Karotki L."/>
            <person name="Kirn A."/>
            <person name="Konantz J."/>
            <person name="Konantz M."/>
            <person name="Oberlander M."/>
            <person name="Rudolph-Geiger S."/>
            <person name="Teucke M."/>
            <person name="Lanz C."/>
            <person name="Raddatz G."/>
            <person name="Osoegawa K."/>
            <person name="Zhu B."/>
            <person name="Rapp A."/>
            <person name="Widaa S."/>
            <person name="Langford C."/>
            <person name="Yang F."/>
            <person name="Schuster S.C."/>
            <person name="Carter N.P."/>
            <person name="Harrow J."/>
            <person name="Ning Z."/>
            <person name="Herrero J."/>
            <person name="Searle S.M."/>
            <person name="Enright A."/>
            <person name="Geisler R."/>
            <person name="Plasterk R.H."/>
            <person name="Lee C."/>
            <person name="Westerfield M."/>
            <person name="de Jong P.J."/>
            <person name="Zon L.I."/>
            <person name="Postlethwait J.H."/>
            <person name="Nusslein-Volhard C."/>
            <person name="Hubbard T.J."/>
            <person name="Roest Crollius H."/>
            <person name="Rogers J."/>
            <person name="Stemple D.L."/>
        </authorList>
    </citation>
    <scope>NUCLEOTIDE SEQUENCE [LARGE SCALE GENOMIC DNA]</scope>
    <source>
        <strain>Tuebingen</strain>
    </source>
</reference>
<reference key="4">
    <citation type="submission" date="2003-10" db="EMBL/GenBank/DDBJ databases">
        <authorList>
            <consortium name="NIH - Zebrafish Gene Collection (ZGC) project"/>
        </authorList>
    </citation>
    <scope>NUCLEOTIDE SEQUENCE [LARGE SCALE MRNA]</scope>
    <source>
        <tissue>Eye</tissue>
    </source>
</reference>
<name>GLRX5_DANRE</name>
<feature type="transit peptide" description="Mitochondrion" evidence="2">
    <location>
        <begin position="1"/>
        <end position="14"/>
    </location>
</feature>
<feature type="chain" id="PRO_0000392601" description="Glutaredoxin-related protein 5, mitochondrial">
    <location>
        <begin position="15"/>
        <end position="155"/>
    </location>
</feature>
<feature type="domain" description="Glutaredoxin" evidence="3">
    <location>
        <begin position="42"/>
        <end position="145"/>
    </location>
</feature>
<feature type="binding site" evidence="1">
    <location>
        <position position="59"/>
    </location>
    <ligand>
        <name>glutathione</name>
        <dbReference type="ChEBI" id="CHEBI:57925"/>
    </ligand>
</feature>
<feature type="binding site" evidence="1">
    <location>
        <position position="67"/>
    </location>
    <ligand>
        <name>[2Fe-2S] cluster</name>
        <dbReference type="ChEBI" id="CHEBI:190135"/>
        <note>ligand shared between dimeric partners</note>
    </ligand>
</feature>
<feature type="binding site" evidence="1">
    <location>
        <begin position="97"/>
        <end position="101"/>
    </location>
    <ligand>
        <name>glutathione</name>
        <dbReference type="ChEBI" id="CHEBI:57925"/>
    </ligand>
</feature>
<feature type="binding site" evidence="1">
    <location>
        <position position="109"/>
    </location>
    <ligand>
        <name>glutathione</name>
        <dbReference type="ChEBI" id="CHEBI:57925"/>
    </ligand>
</feature>
<feature type="binding site" evidence="1">
    <location>
        <begin position="122"/>
        <end position="123"/>
    </location>
    <ligand>
        <name>glutathione</name>
        <dbReference type="ChEBI" id="CHEBI:57925"/>
    </ligand>
</feature>
<protein>
    <recommendedName>
        <fullName>Glutaredoxin-related protein 5, mitochondrial</fullName>
    </recommendedName>
    <alternativeName>
        <fullName>Monothiol glutaredoxin-5</fullName>
    </alternativeName>
</protein>
<organism>
    <name type="scientific">Danio rerio</name>
    <name type="common">Zebrafish</name>
    <name type="synonym">Brachydanio rerio</name>
    <dbReference type="NCBI Taxonomy" id="7955"/>
    <lineage>
        <taxon>Eukaryota</taxon>
        <taxon>Metazoa</taxon>
        <taxon>Chordata</taxon>
        <taxon>Craniata</taxon>
        <taxon>Vertebrata</taxon>
        <taxon>Euteleostomi</taxon>
        <taxon>Actinopterygii</taxon>
        <taxon>Neopterygii</taxon>
        <taxon>Teleostei</taxon>
        <taxon>Ostariophysi</taxon>
        <taxon>Cypriniformes</taxon>
        <taxon>Danionidae</taxon>
        <taxon>Danioninae</taxon>
        <taxon>Danio</taxon>
    </lineage>
</organism>
<dbReference type="EMBL" id="DQ083329">
    <property type="protein sequence ID" value="AAZ30729.1"/>
    <property type="molecule type" value="mRNA"/>
</dbReference>
<dbReference type="EMBL" id="AL845550">
    <property type="protein sequence ID" value="CAI11571.1"/>
    <property type="molecule type" value="Genomic_DNA"/>
</dbReference>
<dbReference type="EMBL" id="BC059659">
    <property type="protein sequence ID" value="AAH59659.1"/>
    <property type="molecule type" value="mRNA"/>
</dbReference>
<dbReference type="RefSeq" id="NP_998186.1">
    <property type="nucleotide sequence ID" value="NM_213021.1"/>
</dbReference>
<dbReference type="SMR" id="Q6PBM1"/>
<dbReference type="FunCoup" id="Q6PBM1">
    <property type="interactions" value="2432"/>
</dbReference>
<dbReference type="STRING" id="7955.ENSDARP00000064111"/>
<dbReference type="PaxDb" id="7955-ENSDARP00000064111"/>
<dbReference type="Ensembl" id="ENSDART00000064112">
    <property type="protein sequence ID" value="ENSDARP00000064111"/>
    <property type="gene ID" value="ENSDARG00000043665"/>
</dbReference>
<dbReference type="GeneID" id="406294"/>
<dbReference type="KEGG" id="dre:406294"/>
<dbReference type="AGR" id="ZFIN:ZDB-GENE-040426-1957"/>
<dbReference type="CTD" id="51218"/>
<dbReference type="ZFIN" id="ZDB-GENE-040426-1957">
    <property type="gene designation" value="glrx5"/>
</dbReference>
<dbReference type="eggNOG" id="KOG0911">
    <property type="taxonomic scope" value="Eukaryota"/>
</dbReference>
<dbReference type="HOGENOM" id="CLU_026126_2_0_1"/>
<dbReference type="InParanoid" id="Q6PBM1"/>
<dbReference type="OMA" id="TKLMPQC"/>
<dbReference type="OrthoDB" id="415696at2759"/>
<dbReference type="PhylomeDB" id="Q6PBM1"/>
<dbReference type="TreeFam" id="TF318988"/>
<dbReference type="PRO" id="PR:Q6PBM1"/>
<dbReference type="Proteomes" id="UP000000437">
    <property type="component" value="Chromosome 20"/>
</dbReference>
<dbReference type="Bgee" id="ENSDARG00000043665">
    <property type="expression patterns" value="Expressed in mature ovarian follicle and 30 other cell types or tissues"/>
</dbReference>
<dbReference type="GO" id="GO:0005737">
    <property type="term" value="C:cytoplasm"/>
    <property type="evidence" value="ECO:0000314"/>
    <property type="project" value="ZFIN"/>
</dbReference>
<dbReference type="GO" id="GO:0005759">
    <property type="term" value="C:mitochondrial matrix"/>
    <property type="evidence" value="ECO:0000318"/>
    <property type="project" value="GO_Central"/>
</dbReference>
<dbReference type="GO" id="GO:0005739">
    <property type="term" value="C:mitochondrion"/>
    <property type="evidence" value="ECO:0000314"/>
    <property type="project" value="ZFIN"/>
</dbReference>
<dbReference type="GO" id="GO:0051537">
    <property type="term" value="F:2 iron, 2 sulfur cluster binding"/>
    <property type="evidence" value="ECO:0007669"/>
    <property type="project" value="UniProtKB-KW"/>
</dbReference>
<dbReference type="GO" id="GO:0046872">
    <property type="term" value="F:metal ion binding"/>
    <property type="evidence" value="ECO:0007669"/>
    <property type="project" value="UniProtKB-KW"/>
</dbReference>
<dbReference type="GO" id="GO:0030097">
    <property type="term" value="P:hemopoiesis"/>
    <property type="evidence" value="ECO:0000315"/>
    <property type="project" value="ZFIN"/>
</dbReference>
<dbReference type="GO" id="GO:0016226">
    <property type="term" value="P:iron-sulfur cluster assembly"/>
    <property type="evidence" value="ECO:0000315"/>
    <property type="project" value="ZFIN"/>
</dbReference>
<dbReference type="CDD" id="cd03028">
    <property type="entry name" value="GRX_PICOT_like"/>
    <property type="match status" value="1"/>
</dbReference>
<dbReference type="FunFam" id="3.40.30.10:FF:000005">
    <property type="entry name" value="Glutaredoxin 5"/>
    <property type="match status" value="1"/>
</dbReference>
<dbReference type="Gene3D" id="3.40.30.10">
    <property type="entry name" value="Glutaredoxin"/>
    <property type="match status" value="1"/>
</dbReference>
<dbReference type="InterPro" id="IPR002109">
    <property type="entry name" value="Glutaredoxin"/>
</dbReference>
<dbReference type="InterPro" id="IPR033658">
    <property type="entry name" value="GRX_PICOT-like"/>
</dbReference>
<dbReference type="InterPro" id="IPR004480">
    <property type="entry name" value="Monothiol_GRX-rel"/>
</dbReference>
<dbReference type="InterPro" id="IPR036249">
    <property type="entry name" value="Thioredoxin-like_sf"/>
</dbReference>
<dbReference type="NCBIfam" id="TIGR00365">
    <property type="entry name" value="Grx4 family monothiol glutaredoxin"/>
    <property type="match status" value="1"/>
</dbReference>
<dbReference type="PANTHER" id="PTHR10293">
    <property type="entry name" value="GLUTAREDOXIN FAMILY MEMBER"/>
    <property type="match status" value="1"/>
</dbReference>
<dbReference type="PANTHER" id="PTHR10293:SF16">
    <property type="entry name" value="GLUTAREDOXIN-RELATED PROTEIN 5, MITOCHONDRIAL"/>
    <property type="match status" value="1"/>
</dbReference>
<dbReference type="Pfam" id="PF00462">
    <property type="entry name" value="Glutaredoxin"/>
    <property type="match status" value="1"/>
</dbReference>
<dbReference type="SUPFAM" id="SSF52833">
    <property type="entry name" value="Thioredoxin-like"/>
    <property type="match status" value="1"/>
</dbReference>
<dbReference type="PROSITE" id="PS51354">
    <property type="entry name" value="GLUTAREDOXIN_2"/>
    <property type="match status" value="1"/>
</dbReference>